<comment type="function">
    <text evidence="1">Specifically dimethylates two adjacent adenosines (A1518 and A1519) in the loop of a conserved hairpin near the 3'-end of 16S rRNA in the 30S particle. May play a critical role in biogenesis of 30S subunits.</text>
</comment>
<comment type="catalytic activity">
    <reaction evidence="1">
        <text>adenosine(1518)/adenosine(1519) in 16S rRNA + 4 S-adenosyl-L-methionine = N(6)-dimethyladenosine(1518)/N(6)-dimethyladenosine(1519) in 16S rRNA + 4 S-adenosyl-L-homocysteine + 4 H(+)</text>
        <dbReference type="Rhea" id="RHEA:19609"/>
        <dbReference type="Rhea" id="RHEA-COMP:10232"/>
        <dbReference type="Rhea" id="RHEA-COMP:10233"/>
        <dbReference type="ChEBI" id="CHEBI:15378"/>
        <dbReference type="ChEBI" id="CHEBI:57856"/>
        <dbReference type="ChEBI" id="CHEBI:59789"/>
        <dbReference type="ChEBI" id="CHEBI:74411"/>
        <dbReference type="ChEBI" id="CHEBI:74493"/>
        <dbReference type="EC" id="2.1.1.182"/>
    </reaction>
</comment>
<comment type="subcellular location">
    <subcellularLocation>
        <location evidence="1">Cytoplasm</location>
    </subcellularLocation>
</comment>
<comment type="similarity">
    <text evidence="1">Belongs to the class I-like SAM-binding methyltransferase superfamily. rRNA adenine N(6)-methyltransferase family. RsmA subfamily.</text>
</comment>
<accession>A2BR00</accession>
<name>RSMA_PROMS</name>
<gene>
    <name evidence="1" type="primary">rsmA</name>
    <name evidence="1" type="synonym">ksgA</name>
    <name type="ordered locus">A9601_09271</name>
</gene>
<organism>
    <name type="scientific">Prochlorococcus marinus (strain AS9601)</name>
    <dbReference type="NCBI Taxonomy" id="146891"/>
    <lineage>
        <taxon>Bacteria</taxon>
        <taxon>Bacillati</taxon>
        <taxon>Cyanobacteriota</taxon>
        <taxon>Cyanophyceae</taxon>
        <taxon>Synechococcales</taxon>
        <taxon>Prochlorococcaceae</taxon>
        <taxon>Prochlorococcus</taxon>
    </lineage>
</organism>
<sequence>MNSKNHHQKKRFGQHWLVNKKILEKIKEIAVLNQNDFILEIGPGKGALTSKLLDSEIKKLHAIELDKDLINLLNDKFNNNDKFSLQQGDILTVNLDSINKKITKVIANIPYNITGPILDIFIGRLGITRNYNYEKIIFLMQKDVVDRILSKEGSPNAGALSVRMQLLSKIKKICDVPPSSFSPPPKVFSSLVVFEPIKNHLRLDISIEKNIDKLLRISFNSRRKMLRNTLNSILSNEEINELSESSKVCFNLRPQDISIEQWIKLAENCIKIKK</sequence>
<keyword id="KW-0963">Cytoplasm</keyword>
<keyword id="KW-0489">Methyltransferase</keyword>
<keyword id="KW-0694">RNA-binding</keyword>
<keyword id="KW-0698">rRNA processing</keyword>
<keyword id="KW-0949">S-adenosyl-L-methionine</keyword>
<keyword id="KW-0808">Transferase</keyword>
<dbReference type="EC" id="2.1.1.182" evidence="1"/>
<dbReference type="EMBL" id="CP000551">
    <property type="protein sequence ID" value="ABM70211.1"/>
    <property type="molecule type" value="Genomic_DNA"/>
</dbReference>
<dbReference type="RefSeq" id="WP_011818367.1">
    <property type="nucleotide sequence ID" value="NC_008816.1"/>
</dbReference>
<dbReference type="SMR" id="A2BR00"/>
<dbReference type="STRING" id="146891.A9601_09271"/>
<dbReference type="KEGG" id="pmb:A9601_09271"/>
<dbReference type="eggNOG" id="COG0030">
    <property type="taxonomic scope" value="Bacteria"/>
</dbReference>
<dbReference type="HOGENOM" id="CLU_041220_0_1_3"/>
<dbReference type="OrthoDB" id="9814755at2"/>
<dbReference type="Proteomes" id="UP000002590">
    <property type="component" value="Chromosome"/>
</dbReference>
<dbReference type="GO" id="GO:0005829">
    <property type="term" value="C:cytosol"/>
    <property type="evidence" value="ECO:0007669"/>
    <property type="project" value="TreeGrafter"/>
</dbReference>
<dbReference type="GO" id="GO:0052908">
    <property type="term" value="F:16S rRNA (adenine(1518)-N(6)/adenine(1519)-N(6))-dimethyltransferase activity"/>
    <property type="evidence" value="ECO:0007669"/>
    <property type="project" value="UniProtKB-EC"/>
</dbReference>
<dbReference type="GO" id="GO:0003723">
    <property type="term" value="F:RNA binding"/>
    <property type="evidence" value="ECO:0007669"/>
    <property type="project" value="UniProtKB-KW"/>
</dbReference>
<dbReference type="CDD" id="cd02440">
    <property type="entry name" value="AdoMet_MTases"/>
    <property type="match status" value="1"/>
</dbReference>
<dbReference type="Gene3D" id="1.10.8.100">
    <property type="entry name" value="Ribosomal RNA adenine dimethylase-like, domain 2"/>
    <property type="match status" value="1"/>
</dbReference>
<dbReference type="Gene3D" id="3.40.50.150">
    <property type="entry name" value="Vaccinia Virus protein VP39"/>
    <property type="match status" value="1"/>
</dbReference>
<dbReference type="HAMAP" id="MF_00607">
    <property type="entry name" value="16SrRNA_methyltr_A"/>
    <property type="match status" value="1"/>
</dbReference>
<dbReference type="InterPro" id="IPR001737">
    <property type="entry name" value="KsgA/Erm"/>
</dbReference>
<dbReference type="InterPro" id="IPR023165">
    <property type="entry name" value="rRNA_Ade_diMease-like_C"/>
</dbReference>
<dbReference type="InterPro" id="IPR020596">
    <property type="entry name" value="rRNA_Ade_Mease_Trfase_CS"/>
</dbReference>
<dbReference type="InterPro" id="IPR020598">
    <property type="entry name" value="rRNA_Ade_methylase_Trfase_N"/>
</dbReference>
<dbReference type="InterPro" id="IPR011530">
    <property type="entry name" value="rRNA_adenine_dimethylase"/>
</dbReference>
<dbReference type="InterPro" id="IPR029063">
    <property type="entry name" value="SAM-dependent_MTases_sf"/>
</dbReference>
<dbReference type="NCBIfam" id="TIGR00755">
    <property type="entry name" value="ksgA"/>
    <property type="match status" value="1"/>
</dbReference>
<dbReference type="PANTHER" id="PTHR11727">
    <property type="entry name" value="DIMETHYLADENOSINE TRANSFERASE"/>
    <property type="match status" value="1"/>
</dbReference>
<dbReference type="PANTHER" id="PTHR11727:SF7">
    <property type="entry name" value="DIMETHYLADENOSINE TRANSFERASE-RELATED"/>
    <property type="match status" value="1"/>
</dbReference>
<dbReference type="Pfam" id="PF00398">
    <property type="entry name" value="RrnaAD"/>
    <property type="match status" value="1"/>
</dbReference>
<dbReference type="SMART" id="SM00650">
    <property type="entry name" value="rADc"/>
    <property type="match status" value="1"/>
</dbReference>
<dbReference type="SUPFAM" id="SSF53335">
    <property type="entry name" value="S-adenosyl-L-methionine-dependent methyltransferases"/>
    <property type="match status" value="1"/>
</dbReference>
<dbReference type="PROSITE" id="PS01131">
    <property type="entry name" value="RRNA_A_DIMETH"/>
    <property type="match status" value="1"/>
</dbReference>
<dbReference type="PROSITE" id="PS51689">
    <property type="entry name" value="SAM_RNA_A_N6_MT"/>
    <property type="match status" value="1"/>
</dbReference>
<proteinExistence type="inferred from homology"/>
<feature type="chain" id="PRO_1000056654" description="Ribosomal RNA small subunit methyltransferase A">
    <location>
        <begin position="1"/>
        <end position="274"/>
    </location>
</feature>
<feature type="binding site" evidence="1">
    <location>
        <position position="15"/>
    </location>
    <ligand>
        <name>S-adenosyl-L-methionine</name>
        <dbReference type="ChEBI" id="CHEBI:59789"/>
    </ligand>
</feature>
<feature type="binding site" evidence="1">
    <location>
        <position position="17"/>
    </location>
    <ligand>
        <name>S-adenosyl-L-methionine</name>
        <dbReference type="ChEBI" id="CHEBI:59789"/>
    </ligand>
</feature>
<feature type="binding site" evidence="1">
    <location>
        <position position="42"/>
    </location>
    <ligand>
        <name>S-adenosyl-L-methionine</name>
        <dbReference type="ChEBI" id="CHEBI:59789"/>
    </ligand>
</feature>
<feature type="binding site" evidence="1">
    <location>
        <position position="64"/>
    </location>
    <ligand>
        <name>S-adenosyl-L-methionine</name>
        <dbReference type="ChEBI" id="CHEBI:59789"/>
    </ligand>
</feature>
<feature type="binding site" evidence="1">
    <location>
        <position position="89"/>
    </location>
    <ligand>
        <name>S-adenosyl-L-methionine</name>
        <dbReference type="ChEBI" id="CHEBI:59789"/>
    </ligand>
</feature>
<feature type="binding site" evidence="1">
    <location>
        <position position="108"/>
    </location>
    <ligand>
        <name>S-adenosyl-L-methionine</name>
        <dbReference type="ChEBI" id="CHEBI:59789"/>
    </ligand>
</feature>
<evidence type="ECO:0000255" key="1">
    <source>
        <dbReference type="HAMAP-Rule" id="MF_00607"/>
    </source>
</evidence>
<protein>
    <recommendedName>
        <fullName evidence="1">Ribosomal RNA small subunit methyltransferase A</fullName>
        <ecNumber evidence="1">2.1.1.182</ecNumber>
    </recommendedName>
    <alternativeName>
        <fullName evidence="1">16S rRNA (adenine(1518)-N(6)/adenine(1519)-N(6))-dimethyltransferase</fullName>
    </alternativeName>
    <alternativeName>
        <fullName evidence="1">16S rRNA dimethyladenosine transferase</fullName>
    </alternativeName>
    <alternativeName>
        <fullName evidence="1">16S rRNA dimethylase</fullName>
    </alternativeName>
    <alternativeName>
        <fullName evidence="1">S-adenosylmethionine-6-N', N'-adenosyl(rRNA) dimethyltransferase</fullName>
    </alternativeName>
</protein>
<reference key="1">
    <citation type="journal article" date="2007" name="PLoS Genet.">
        <title>Patterns and implications of gene gain and loss in the evolution of Prochlorococcus.</title>
        <authorList>
            <person name="Kettler G.C."/>
            <person name="Martiny A.C."/>
            <person name="Huang K."/>
            <person name="Zucker J."/>
            <person name="Coleman M.L."/>
            <person name="Rodrigue S."/>
            <person name="Chen F."/>
            <person name="Lapidus A."/>
            <person name="Ferriera S."/>
            <person name="Johnson J."/>
            <person name="Steglich C."/>
            <person name="Church G.M."/>
            <person name="Richardson P."/>
            <person name="Chisholm S.W."/>
        </authorList>
    </citation>
    <scope>NUCLEOTIDE SEQUENCE [LARGE SCALE GENOMIC DNA]</scope>
    <source>
        <strain>AS9601</strain>
    </source>
</reference>